<name>ASTB_ACIB3</name>
<organism>
    <name type="scientific">Acinetobacter baumannii (strain AB307-0294)</name>
    <dbReference type="NCBI Taxonomy" id="557600"/>
    <lineage>
        <taxon>Bacteria</taxon>
        <taxon>Pseudomonadati</taxon>
        <taxon>Pseudomonadota</taxon>
        <taxon>Gammaproteobacteria</taxon>
        <taxon>Moraxellales</taxon>
        <taxon>Moraxellaceae</taxon>
        <taxon>Acinetobacter</taxon>
        <taxon>Acinetobacter calcoaceticus/baumannii complex</taxon>
    </lineage>
</organism>
<evidence type="ECO:0000255" key="1">
    <source>
        <dbReference type="HAMAP-Rule" id="MF_01172"/>
    </source>
</evidence>
<proteinExistence type="inferred from homology"/>
<sequence>MKGYEVNFDGLVGPTHHYAGLSFGNEASTKNRNNLSNPKLAAKQGLLKMKALADMGMKQGVLAPHERPHVPMLRRLGFTGDDISVVAQAMRYSPELLSSLSSASPMWTANAATVSPSADSQDERVHFTAANLNNKFHRSIEAETTSQVLQAIFKNERHFVHHEALPQVALFGDEGAANHNRLGGDYAKRGVQVFVYGQQHLNNGLPGPKRYPARQTREASEAIARLHRLDEAHTVFVQQNPDVIDQGVFHNDVIAVSNQQVLFHHQHAFLNQDQAFAEIRQKMASIGEDFISIEVPENRVTVDDAVATYLFNSQILTRPDGGMTIVVPEESRQNAAVWSYLNDMIQMGTPIDAIQVYDLRESMRNGGGPACLRLRVALNETELNAVNPKVLMNDQLFMTLNQWVDKHYRDRLAQEDLADPHLLMESRMALDELTKILGLGSVYPFQK</sequence>
<keyword id="KW-0056">Arginine metabolism</keyword>
<keyword id="KW-0378">Hydrolase</keyword>
<reference key="1">
    <citation type="journal article" date="2008" name="J. Bacteriol.">
        <title>Comparative genome sequence analysis of multidrug-resistant Acinetobacter baumannii.</title>
        <authorList>
            <person name="Adams M.D."/>
            <person name="Goglin K."/>
            <person name="Molyneaux N."/>
            <person name="Hujer K.M."/>
            <person name="Lavender H."/>
            <person name="Jamison J.J."/>
            <person name="MacDonald I.J."/>
            <person name="Martin K.M."/>
            <person name="Russo T."/>
            <person name="Campagnari A.A."/>
            <person name="Hujer A.M."/>
            <person name="Bonomo R.A."/>
            <person name="Gill S.R."/>
        </authorList>
    </citation>
    <scope>NUCLEOTIDE SEQUENCE [LARGE SCALE GENOMIC DNA]</scope>
    <source>
        <strain>AB307-0294</strain>
    </source>
</reference>
<protein>
    <recommendedName>
        <fullName evidence="1">N-succinylarginine dihydrolase</fullName>
        <ecNumber evidence="1">3.5.3.23</ecNumber>
    </recommendedName>
</protein>
<comment type="function">
    <text evidence="1">Catalyzes the hydrolysis of N(2)-succinylarginine into N(2)-succinylornithine, ammonia and CO(2).</text>
</comment>
<comment type="catalytic activity">
    <reaction evidence="1">
        <text>N(2)-succinyl-L-arginine + 2 H2O + 2 H(+) = N(2)-succinyl-L-ornithine + 2 NH4(+) + CO2</text>
        <dbReference type="Rhea" id="RHEA:19533"/>
        <dbReference type="ChEBI" id="CHEBI:15377"/>
        <dbReference type="ChEBI" id="CHEBI:15378"/>
        <dbReference type="ChEBI" id="CHEBI:16526"/>
        <dbReference type="ChEBI" id="CHEBI:28938"/>
        <dbReference type="ChEBI" id="CHEBI:58241"/>
        <dbReference type="ChEBI" id="CHEBI:58514"/>
        <dbReference type="EC" id="3.5.3.23"/>
    </reaction>
</comment>
<comment type="pathway">
    <text evidence="1">Amino-acid degradation; L-arginine degradation via AST pathway; L-glutamate and succinate from L-arginine: step 2/5.</text>
</comment>
<comment type="subunit">
    <text evidence="1">Homodimer.</text>
</comment>
<comment type="similarity">
    <text evidence="1">Belongs to the succinylarginine dihydrolase family.</text>
</comment>
<dbReference type="EC" id="3.5.3.23" evidence="1"/>
<dbReference type="EMBL" id="CP001172">
    <property type="protein sequence ID" value="ACJ58422.1"/>
    <property type="molecule type" value="Genomic_DNA"/>
</dbReference>
<dbReference type="RefSeq" id="WP_000679450.1">
    <property type="nucleotide sequence ID" value="NZ_CP001172.1"/>
</dbReference>
<dbReference type="SMR" id="B7GVV0"/>
<dbReference type="GeneID" id="92895367"/>
<dbReference type="HOGENOM" id="CLU_053835_0_0_6"/>
<dbReference type="UniPathway" id="UPA00185">
    <property type="reaction ID" value="UER00280"/>
</dbReference>
<dbReference type="Proteomes" id="UP000006924">
    <property type="component" value="Chromosome"/>
</dbReference>
<dbReference type="GO" id="GO:0009015">
    <property type="term" value="F:N-succinylarginine dihydrolase activity"/>
    <property type="evidence" value="ECO:0007669"/>
    <property type="project" value="UniProtKB-UniRule"/>
</dbReference>
<dbReference type="GO" id="GO:0019544">
    <property type="term" value="P:arginine catabolic process to glutamate"/>
    <property type="evidence" value="ECO:0007669"/>
    <property type="project" value="UniProtKB-UniRule"/>
</dbReference>
<dbReference type="GO" id="GO:0019545">
    <property type="term" value="P:arginine catabolic process to succinate"/>
    <property type="evidence" value="ECO:0007669"/>
    <property type="project" value="UniProtKB-UniRule"/>
</dbReference>
<dbReference type="Gene3D" id="3.75.10.20">
    <property type="entry name" value="Succinylarginine dihydrolase"/>
    <property type="match status" value="1"/>
</dbReference>
<dbReference type="HAMAP" id="MF_01172">
    <property type="entry name" value="AstB"/>
    <property type="match status" value="1"/>
</dbReference>
<dbReference type="InterPro" id="IPR037031">
    <property type="entry name" value="AstB_sf"/>
</dbReference>
<dbReference type="InterPro" id="IPR007079">
    <property type="entry name" value="SuccinylArg_d-Hdrlase_AstB"/>
</dbReference>
<dbReference type="NCBIfam" id="TIGR03241">
    <property type="entry name" value="arg_catab_astB"/>
    <property type="match status" value="1"/>
</dbReference>
<dbReference type="NCBIfam" id="NF009789">
    <property type="entry name" value="PRK13281.1"/>
    <property type="match status" value="1"/>
</dbReference>
<dbReference type="PANTHER" id="PTHR30420">
    <property type="entry name" value="N-SUCCINYLARGININE DIHYDROLASE"/>
    <property type="match status" value="1"/>
</dbReference>
<dbReference type="PANTHER" id="PTHR30420:SF2">
    <property type="entry name" value="N-SUCCINYLARGININE DIHYDROLASE"/>
    <property type="match status" value="1"/>
</dbReference>
<dbReference type="Pfam" id="PF04996">
    <property type="entry name" value="AstB"/>
    <property type="match status" value="1"/>
</dbReference>
<dbReference type="SUPFAM" id="SSF55909">
    <property type="entry name" value="Pentein"/>
    <property type="match status" value="1"/>
</dbReference>
<accession>B7GVV0</accession>
<feature type="chain" id="PRO_1000137995" description="N-succinylarginine dihydrolase">
    <location>
        <begin position="1"/>
        <end position="447"/>
    </location>
</feature>
<feature type="active site" evidence="1">
    <location>
        <position position="174"/>
    </location>
</feature>
<feature type="active site" evidence="1">
    <location>
        <position position="250"/>
    </location>
</feature>
<feature type="active site" description="Nucleophile" evidence="1">
    <location>
        <position position="371"/>
    </location>
</feature>
<feature type="binding site" evidence="1">
    <location>
        <begin position="19"/>
        <end position="28"/>
    </location>
    <ligand>
        <name>substrate</name>
    </ligand>
</feature>
<feature type="binding site" evidence="1">
    <location>
        <position position="110"/>
    </location>
    <ligand>
        <name>substrate</name>
    </ligand>
</feature>
<feature type="binding site" evidence="1">
    <location>
        <begin position="137"/>
        <end position="138"/>
    </location>
    <ligand>
        <name>substrate</name>
    </ligand>
</feature>
<feature type="binding site" evidence="1">
    <location>
        <position position="214"/>
    </location>
    <ligand>
        <name>substrate</name>
    </ligand>
</feature>
<feature type="binding site" evidence="1">
    <location>
        <position position="252"/>
    </location>
    <ligand>
        <name>substrate</name>
    </ligand>
</feature>
<feature type="binding site" evidence="1">
    <location>
        <position position="365"/>
    </location>
    <ligand>
        <name>substrate</name>
    </ligand>
</feature>
<gene>
    <name evidence="1" type="primary">astB</name>
    <name type="ordered locus">ABBFA_000380</name>
</gene>